<accession>Q84940</accession>
<accession>Q85037</accession>
<proteinExistence type="evidence at protein level"/>
<keyword id="KW-1035">Host cytoplasm</keyword>
<keyword id="KW-1037">Host cytoskeleton</keyword>
<keyword id="KW-0945">Host-virus interaction</keyword>
<keyword id="KW-1090">Inhibition of host innate immune response by virus</keyword>
<keyword id="KW-1092">Inhibition of host IRF3 by virus</keyword>
<keyword id="KW-1093">Inhibition of host IRF7 by virus</keyword>
<keyword id="KW-1100">Inhibition of host NF-kappa-B by virus</keyword>
<keyword id="KW-1113">Inhibition of host RLR pathway by virus</keyword>
<keyword id="KW-0922">Interferon antiviral system evasion</keyword>
<keyword id="KW-0479">Metal-binding</keyword>
<keyword id="KW-0597">Phosphoprotein</keyword>
<keyword id="KW-0694">RNA-binding</keyword>
<keyword id="KW-0899">Viral immunoevasion</keyword>
<reference key="1">
    <citation type="journal article" date="1994" name="Virology">
        <title>Comparison of the rotavirus nonstructural protein NSP1 (NS53) from different species by sequence analysis and northern blot hybridization.</title>
        <authorList>
            <person name="Dunn S.J."/>
            <person name="Cross T.L."/>
            <person name="Greenberg H.B."/>
        </authorList>
    </citation>
    <scope>NUCLEOTIDE SEQUENCE [GENOMIC RNA]</scope>
</reference>
<reference key="2">
    <citation type="journal article" date="1994" name="J. Gen. Virol.">
        <title>Molecular biology of rotaviruses. IX. Conservation and divergence in genome segment 5.</title>
        <authorList>
            <person name="Xu L.I."/>
            <person name="Tian Y."/>
            <person name="Tarlow O."/>
            <person name="Harbour D.A."/>
            <person name="McCrae M.A."/>
        </authorList>
    </citation>
    <scope>NUCLEOTIDE SEQUENCE [GENOMIC RNA]</scope>
</reference>
<reference key="3">
    <citation type="journal article" date="1996" name="Arch. Virol.">
        <title>Species-specific and interspecies relatedness of NSP1 sequences in human, porcine, bovine, feline, and equine rotavirus strains.</title>
        <authorList>
            <person name="Kojima K."/>
            <person name="Taniguchi K."/>
            <person name="Kobayashi N."/>
        </authorList>
    </citation>
    <scope>NUCLEOTIDE SEQUENCE [GENOMIC RNA]</scope>
</reference>
<reference key="4">
    <citation type="journal article" date="2007" name="J. Gen. Virol.">
        <title>Zinc-binding domain of rotavirus NSP1 is required for proteasome-dependent degradation of IRF3 and autoregulatory NSP1 stability.</title>
        <authorList>
            <person name="Graff J.W."/>
            <person name="Ewen J."/>
            <person name="Ettayebi K."/>
            <person name="Hardy M.E."/>
        </authorList>
    </citation>
    <scope>NUCLEOTIDE SEQUENCE [GENOMIC RNA]</scope>
    <scope>FUNCTION</scope>
</reference>
<reference key="5">
    <citation type="journal article" date="2017" name="MBio">
        <title>Rotavirus NSP1 Requires Casein Kinase II-Mediated Phosphorylation for Hijacking of Cullin-RING Ligases.</title>
        <authorList>
            <person name="Davis K.A."/>
            <person name="Morelli M."/>
            <person name="Patton J.T."/>
        </authorList>
    </citation>
    <scope>FUNCTION</scope>
    <scope>INTERACTION WITH HOST CUL1; CUL3 AND BTRC</scope>
    <scope>PHOSPHORYLATION</scope>
    <scope>MUTAGENESIS OF CYS-42 AND GLU-486</scope>
</reference>
<name>NSP1_ROTP5</name>
<organismHost>
    <name type="scientific">Sus scrofa</name>
    <name type="common">Pig</name>
    <dbReference type="NCBI Taxonomy" id="9823"/>
</organismHost>
<protein>
    <recommendedName>
        <fullName evidence="1">Non-structural protein 1</fullName>
        <shortName evidence="1">NSP1</shortName>
    </recommendedName>
    <alternativeName>
        <fullName evidence="1">NCVP2</fullName>
    </alternativeName>
    <alternativeName>
        <fullName evidence="1">Non-structural RNA-binding protein 53</fullName>
        <shortName evidence="1">NS53</shortName>
    </alternativeName>
</protein>
<sequence length="486" mass="57235">MATFKDACYYYKRINKLNHAVLKLGVNDTWRPSPPTKYKGWCLDCCQHTDLTYCRGCTMYHVCQWCSQYGRCFLDNEPHLLRMRTFKNEVTKDDLMNLVDMYDTLFPMNQKIVDKFINNTRQHKCRNECVNQWYNHLLMPITLQSLSIELDGDVYYIFGYYDDMNNVNQTPFSFVNLVDIYDKLLLDDVNFTRMSFLPVTLQQEYALRYFSKSRFISEQRKCVSDSHFSINVLENLHNPSFKMQITRNCSELSSDWNGACKLVKDTSAYFNILKTSHVEFYSISTRCRVFTQRKLKIASKLIKPNYITSNHRTSATEVHNCKWCSINSSYTVWNDFRVKKIYDNIFNFLRALVKSNVNVGHCSSQEKIYECVENILDVCDNEKWKTSVTKIFNYLEPVELNAVNYVLFNHEVNWDVINVLVQSIGKVPQILTLNDVTTIMQSIIYEWFDTKYMRNTPMTTFTVDKLRRLCTGSKTVDYDSGISDVE</sequence>
<evidence type="ECO:0000255" key="1">
    <source>
        <dbReference type="HAMAP-Rule" id="MF_04088"/>
    </source>
</evidence>
<evidence type="ECO:0000269" key="2">
    <source>
    </source>
</evidence>
<evidence type="ECO:0000269" key="3">
    <source>
    </source>
</evidence>
<evidence type="ECO:0000305" key="4">
    <source>
    </source>
</evidence>
<organism>
    <name type="scientific">Rotavirus A (strain RVA/Pig/United States/OSU/1977/G5P9[7])</name>
    <name type="common">RV-A</name>
    <name type="synonym">Rotavirus A (strain Ohio State University)</name>
    <dbReference type="NCBI Taxonomy" id="10915"/>
    <lineage>
        <taxon>Viruses</taxon>
        <taxon>Riboviria</taxon>
        <taxon>Orthornavirae</taxon>
        <taxon>Duplornaviricota</taxon>
        <taxon>Resentoviricetes</taxon>
        <taxon>Reovirales</taxon>
        <taxon>Sedoreoviridae</taxon>
        <taxon>Rotavirus</taxon>
        <taxon>Rotavirus A</taxon>
    </lineage>
</organism>
<dbReference type="EMBL" id="U08432">
    <property type="protein sequence ID" value="AAA50495.1"/>
    <property type="molecule type" value="Genomic_RNA"/>
</dbReference>
<dbReference type="EMBL" id="Z12107">
    <property type="protein sequence ID" value="CAA78092.1"/>
    <property type="molecule type" value="Genomic_RNA"/>
</dbReference>
<dbReference type="EMBL" id="D38153">
    <property type="protein sequence ID" value="BAA20544.1"/>
    <property type="molecule type" value="Genomic_RNA"/>
</dbReference>
<dbReference type="PIR" id="S31805">
    <property type="entry name" value="S31805"/>
</dbReference>
<dbReference type="IntAct" id="Q84940">
    <property type="interactions" value="19"/>
</dbReference>
<dbReference type="GO" id="GO:0030430">
    <property type="term" value="C:host cell cytoplasm"/>
    <property type="evidence" value="ECO:0007669"/>
    <property type="project" value="UniProtKB-UniRule"/>
</dbReference>
<dbReference type="GO" id="GO:0044163">
    <property type="term" value="C:host cytoskeleton"/>
    <property type="evidence" value="ECO:0007669"/>
    <property type="project" value="UniProtKB-SubCell"/>
</dbReference>
<dbReference type="GO" id="GO:0046872">
    <property type="term" value="F:metal ion binding"/>
    <property type="evidence" value="ECO:0007669"/>
    <property type="project" value="UniProtKB-UniRule"/>
</dbReference>
<dbReference type="GO" id="GO:0003723">
    <property type="term" value="F:RNA binding"/>
    <property type="evidence" value="ECO:0007669"/>
    <property type="project" value="UniProtKB-UniRule"/>
</dbReference>
<dbReference type="GO" id="GO:0039548">
    <property type="term" value="P:symbiont-mediated suppression of host cytoplasmic pattern recognition receptor signaling pathway via inhibition of IRF3 activity"/>
    <property type="evidence" value="ECO:0007669"/>
    <property type="project" value="UniProtKB-UniRule"/>
</dbReference>
<dbReference type="GO" id="GO:0039557">
    <property type="term" value="P:symbiont-mediated suppression of host cytoplasmic pattern recognition receptor signaling pathway via inhibition of IRF7 activity"/>
    <property type="evidence" value="ECO:0007669"/>
    <property type="project" value="UniProtKB-UniRule"/>
</dbReference>
<dbReference type="GO" id="GO:0085034">
    <property type="term" value="P:symbiont-mediated suppression of host NF-kappaB cascade"/>
    <property type="evidence" value="ECO:0007669"/>
    <property type="project" value="UniProtKB-UniRule"/>
</dbReference>
<dbReference type="HAMAP" id="MF_04088">
    <property type="entry name" value="ROTA_NSP1"/>
    <property type="match status" value="1"/>
</dbReference>
<dbReference type="InterPro" id="IPR002148">
    <property type="entry name" value="Rotavirus_NSP1"/>
</dbReference>
<dbReference type="Pfam" id="PF00981">
    <property type="entry name" value="Rota_NS53"/>
    <property type="match status" value="1"/>
</dbReference>
<feature type="chain" id="PRO_0000367822" description="Non-structural protein 1">
    <location>
        <begin position="1"/>
        <end position="486"/>
    </location>
</feature>
<feature type="region of interest" description="RNA-binding" evidence="1">
    <location>
        <begin position="1"/>
        <end position="81"/>
    </location>
</feature>
<feature type="region of interest" description="Zinc-binding domain" evidence="1">
    <location>
        <begin position="42"/>
        <end position="79"/>
    </location>
</feature>
<feature type="region of interest" description="Important for cytoskeleton localization" evidence="1">
    <location>
        <begin position="82"/>
        <end position="176"/>
    </location>
</feature>
<feature type="region of interest" description="Interaction with host IRF3" evidence="1">
    <location>
        <begin position="317"/>
        <end position="486"/>
    </location>
</feature>
<feature type="short sequence motif" description="IKBKB-like degron (ILD) motif" evidence="1 3">
    <location>
        <begin position="479"/>
        <end position="483"/>
    </location>
</feature>
<feature type="short sequence motif" description="pLxIS motif" evidence="1">
    <location>
        <begin position="480"/>
        <end position="483"/>
    </location>
</feature>
<feature type="mutagenesis site" description="Complete loss of interaction with host CUL1 and CUL3." evidence="3">
    <original>C</original>
    <variation>A</variation>
    <location>
        <position position="42"/>
    </location>
</feature>
<feature type="mutagenesis site" description="Complete loss of phosphorylation." evidence="3">
    <original>E</original>
    <variation>Q</variation>
    <location>
        <position position="486"/>
    </location>
</feature>
<feature type="sequence conflict" description="In Ref. 2; CAA78092." ref="2">
    <original>Y</original>
    <variation>F</variation>
    <location>
        <position position="102"/>
    </location>
</feature>
<feature type="sequence conflict" description="In Ref. 2; CAA78092." ref="2">
    <original>H</original>
    <variation>R</variation>
    <location>
        <position position="227"/>
    </location>
</feature>
<feature type="sequence conflict" description="In Ref. 2; CAA78092." ref="2">
    <original>S</original>
    <variation>N</variation>
    <location>
        <position position="250"/>
    </location>
</feature>
<feature type="sequence conflict" description="In Ref. 2; CAA78092." ref="2">
    <original>C</original>
    <variation>S</variation>
    <location>
        <position position="321"/>
    </location>
</feature>
<feature type="sequence conflict" description="In Ref. 2; CAA78092." ref="2">
    <original>E</original>
    <variation>Q</variation>
    <location>
        <position position="370"/>
    </location>
</feature>
<feature type="sequence conflict" description="In Ref. 2; CAA78092." ref="2">
    <original>DT</original>
    <variation>TR</variation>
    <location>
        <begin position="449"/>
        <end position="450"/>
    </location>
</feature>
<feature type="sequence conflict" description="In Ref. 2; CAA78092." ref="2">
    <original>YD</original>
    <variation>CN</variation>
    <location>
        <begin position="478"/>
        <end position="479"/>
    </location>
</feature>
<comment type="function">
    <text evidence="1 2 3">Plays a role in the inhibition of host innate immunity by inducing the degradation of key host factors required to activate interferon production such as IRF3, IRF5 or IRF7. Associates with components of cullin RING ligases (CRLs) including CUL1 or CUL3, which are essential multisubunit ubiquitination complexes, to modulate their activities. Recognizes the host NF-kappa-B regulator BTRC through the presence of a DSGXS motif in the C-terminal substrate recognition domain.</text>
</comment>
<comment type="subunit">
    <text evidence="1">Interacts (via C-terminus) with host IRF3; this interaction leads to IRF3 degradation. Interacts with host IRF7; this interaction leads to IRF7 degradation. Interacts with host CUL1 and CUL3. Interacts with host BTRC.</text>
</comment>
<comment type="subcellular location">
    <subcellularLocation>
        <location evidence="1">Host cytoplasm</location>
        <location evidence="1">Host cytoskeleton</location>
    </subcellularLocation>
</comment>
<comment type="domain">
    <text evidence="1">The integrity of the zinc-binding domain in NSP1 is important for degradation of host IRF3.</text>
</comment>
<comment type="domain">
    <text evidence="1">The pLxIS motif targets host IRF3 for degradation; however phosphorylation of NSP1 pLxIS motif is not required for its activity.</text>
</comment>
<comment type="PTM">
    <text evidence="1 3">The C-terminal region is phosphorylated by host CKII/CSNK2A1. Phosphorylation of the DSGXS motif is essential for host NF-kappa-B inhibition.</text>
</comment>
<comment type="similarity">
    <text evidence="1">Belongs to the rotavirus NSP1 family.</text>
</comment>
<comment type="caution">
    <text evidence="4">NSP1 has been shown (PubMed:17251580) to be almost unable to bind and degrade IRF3 in cell culture. However, this does not implies that it is the case in vivo, since the down-regulation of host antiviral state is not essential for the virus in cell culture and the used cells were not of porcine origin.</text>
</comment>